<feature type="chain" id="PRO_0000402083" description="Alpha-tubulin N-acetyltransferase">
    <location>
        <begin position="1"/>
        <end position="246"/>
    </location>
</feature>
<feature type="domain" description="N-acetyltransferase" evidence="1">
    <location>
        <begin position="21"/>
        <end position="202"/>
    </location>
</feature>
<feature type="binding site" evidence="1">
    <location>
        <begin position="135"/>
        <end position="148"/>
    </location>
    <ligand>
        <name>acetyl-CoA</name>
        <dbReference type="ChEBI" id="CHEBI:57288"/>
    </ligand>
</feature>
<feature type="binding site" evidence="1">
    <location>
        <begin position="172"/>
        <end position="181"/>
    </location>
    <ligand>
        <name>acetyl-CoA</name>
        <dbReference type="ChEBI" id="CHEBI:57288"/>
    </ligand>
</feature>
<feature type="site" description="Crucial for catalytic activity" evidence="1">
    <location>
        <position position="74"/>
    </location>
</feature>
<gene>
    <name type="ORF">LinJ25.1190</name>
    <name type="ORF">LinJ_25_1190</name>
</gene>
<organism>
    <name type="scientific">Leishmania infantum</name>
    <dbReference type="NCBI Taxonomy" id="5671"/>
    <lineage>
        <taxon>Eukaryota</taxon>
        <taxon>Discoba</taxon>
        <taxon>Euglenozoa</taxon>
        <taxon>Kinetoplastea</taxon>
        <taxon>Metakinetoplastina</taxon>
        <taxon>Trypanosomatida</taxon>
        <taxon>Trypanosomatidae</taxon>
        <taxon>Leishmaniinae</taxon>
        <taxon>Leishmania</taxon>
    </lineage>
</organism>
<name>ATAT_LEIIN</name>
<protein>
    <recommendedName>
        <fullName evidence="1">Alpha-tubulin N-acetyltransferase</fullName>
        <shortName evidence="1">Alpha-TAT</shortName>
        <shortName evidence="1">TAT</shortName>
        <ecNumber evidence="1">2.3.1.108</ecNumber>
    </recommendedName>
    <alternativeName>
        <fullName evidence="1">Acetyltransferase mec-17 homolog</fullName>
    </alternativeName>
</protein>
<comment type="function">
    <text evidence="1">Specifically acetylates 'Lys-40' in alpha-tubulin on the lumenal side of microtubules. Promotes microtubule destabilization and accelerates microtubule dynamics; this activity may be independent of acetylation activity. Acetylates alpha-tubulin with a slow enzymatic rate, due to a catalytic site that is not optimized for acetyl transfer. Enters the microtubule through each end and diffuses quickly throughout the lumen of microtubules. Acetylates only long/old microtubules because of its slow acetylation rate since it does not have time to act on dynamically unstable microtubules before the enzyme is released.</text>
</comment>
<comment type="catalytic activity">
    <reaction evidence="1">
        <text>L-lysyl-[alpha-tubulin] + acetyl-CoA = N(6)-acetyl-L-lysyl-[alpha-tubulin] + CoA + H(+)</text>
        <dbReference type="Rhea" id="RHEA:15277"/>
        <dbReference type="Rhea" id="RHEA-COMP:11278"/>
        <dbReference type="Rhea" id="RHEA-COMP:11279"/>
        <dbReference type="ChEBI" id="CHEBI:15378"/>
        <dbReference type="ChEBI" id="CHEBI:29969"/>
        <dbReference type="ChEBI" id="CHEBI:57287"/>
        <dbReference type="ChEBI" id="CHEBI:57288"/>
        <dbReference type="ChEBI" id="CHEBI:61930"/>
        <dbReference type="EC" id="2.3.1.108"/>
    </reaction>
</comment>
<comment type="similarity">
    <text evidence="1">Belongs to the acetyltransferase ATAT1 family.</text>
</comment>
<proteinExistence type="inferred from homology"/>
<dbReference type="EC" id="2.3.1.108" evidence="1"/>
<dbReference type="EMBL" id="FR796457">
    <property type="protein sequence ID" value="CAM68587.1"/>
    <property type="molecule type" value="Genomic_DNA"/>
</dbReference>
<dbReference type="RefSeq" id="XP_001466148.1">
    <property type="nucleotide sequence ID" value="XM_001466111.1"/>
</dbReference>
<dbReference type="SMR" id="A4I1F7"/>
<dbReference type="GeneID" id="5069583"/>
<dbReference type="KEGG" id="lif:LINJ_25_1190"/>
<dbReference type="VEuPathDB" id="TriTrypDB:LINF_250017700"/>
<dbReference type="eggNOG" id="KOG4601">
    <property type="taxonomic scope" value="Eukaryota"/>
</dbReference>
<dbReference type="InParanoid" id="A4I1F7"/>
<dbReference type="OMA" id="LCCTIDI"/>
<dbReference type="Proteomes" id="UP000008153">
    <property type="component" value="Chromosome 25"/>
</dbReference>
<dbReference type="GO" id="GO:0005874">
    <property type="term" value="C:microtubule"/>
    <property type="evidence" value="ECO:0007669"/>
    <property type="project" value="InterPro"/>
</dbReference>
<dbReference type="GO" id="GO:0019799">
    <property type="term" value="F:tubulin N-acetyltransferase activity"/>
    <property type="evidence" value="ECO:0007669"/>
    <property type="project" value="UniProtKB-UniRule"/>
</dbReference>
<dbReference type="GO" id="GO:0070507">
    <property type="term" value="P:regulation of microtubule cytoskeleton organization"/>
    <property type="evidence" value="ECO:0007669"/>
    <property type="project" value="UniProtKB-UniRule"/>
</dbReference>
<dbReference type="CDD" id="cd04301">
    <property type="entry name" value="NAT_SF"/>
    <property type="match status" value="1"/>
</dbReference>
<dbReference type="FunFam" id="3.40.630.30:FF:000166">
    <property type="entry name" value="Alpha-tubulin N-acetyltransferase"/>
    <property type="match status" value="1"/>
</dbReference>
<dbReference type="Gene3D" id="3.40.630.30">
    <property type="match status" value="1"/>
</dbReference>
<dbReference type="HAMAP" id="MF_03130">
    <property type="entry name" value="mec17"/>
    <property type="match status" value="1"/>
</dbReference>
<dbReference type="InterPro" id="IPR016181">
    <property type="entry name" value="Acyl_CoA_acyltransferase"/>
</dbReference>
<dbReference type="InterPro" id="IPR038746">
    <property type="entry name" value="Atat"/>
</dbReference>
<dbReference type="InterPro" id="IPR007965">
    <property type="entry name" value="GNAT_ATAT"/>
</dbReference>
<dbReference type="PANTHER" id="PTHR12327">
    <property type="entry name" value="ALPHA-TUBULIN N-ACETYLTRANSFERASE 1"/>
    <property type="match status" value="1"/>
</dbReference>
<dbReference type="PANTHER" id="PTHR12327:SF0">
    <property type="entry name" value="ALPHA-TUBULIN N-ACETYLTRANSFERASE 1"/>
    <property type="match status" value="1"/>
</dbReference>
<dbReference type="Pfam" id="PF05301">
    <property type="entry name" value="Acetyltransf_16"/>
    <property type="match status" value="1"/>
</dbReference>
<dbReference type="SUPFAM" id="SSF55729">
    <property type="entry name" value="Acyl-CoA N-acyltransferases (Nat)"/>
    <property type="match status" value="1"/>
</dbReference>
<dbReference type="PROSITE" id="PS51730">
    <property type="entry name" value="GNAT_ATAT"/>
    <property type="match status" value="1"/>
</dbReference>
<evidence type="ECO:0000255" key="1">
    <source>
        <dbReference type="HAMAP-Rule" id="MF_03130"/>
    </source>
</evidence>
<accession>A4I1F7</accession>
<keyword id="KW-0012">Acyltransferase</keyword>
<keyword id="KW-1185">Reference proteome</keyword>
<keyword id="KW-0808">Transferase</keyword>
<reference key="1">
    <citation type="journal article" date="2007" name="Nat. Genet.">
        <title>Comparative genomic analysis of three Leishmania species that cause diverse human disease.</title>
        <authorList>
            <person name="Peacock C.S."/>
            <person name="Seeger K."/>
            <person name="Harris D."/>
            <person name="Murphy L."/>
            <person name="Ruiz J.C."/>
            <person name="Quail M.A."/>
            <person name="Peters N."/>
            <person name="Adlem E."/>
            <person name="Tivey A."/>
            <person name="Aslett M."/>
            <person name="Kerhornou A."/>
            <person name="Ivens A."/>
            <person name="Fraser A."/>
            <person name="Rajandream M.-A."/>
            <person name="Carver T."/>
            <person name="Norbertczak H."/>
            <person name="Chillingworth T."/>
            <person name="Hance Z."/>
            <person name="Jagels K."/>
            <person name="Moule S."/>
            <person name="Ormond D."/>
            <person name="Rutter S."/>
            <person name="Sqaures R."/>
            <person name="Whitehead S."/>
            <person name="Rabbinowitsch E."/>
            <person name="Arrowsmith C."/>
            <person name="White B."/>
            <person name="Thurston S."/>
            <person name="Bringaud F."/>
            <person name="Baldauf S.L."/>
            <person name="Faulconbridge A."/>
            <person name="Jeffares D."/>
            <person name="Depledge D.P."/>
            <person name="Oyola S.O."/>
            <person name="Hilley J.D."/>
            <person name="Brito L.O."/>
            <person name="Tosi L.R.O."/>
            <person name="Barrell B."/>
            <person name="Cruz A.K."/>
            <person name="Mottram J.C."/>
            <person name="Smith D.F."/>
            <person name="Berriman M."/>
        </authorList>
    </citation>
    <scope>NUCLEOTIDE SEQUENCE [LARGE SCALE GENOMIC DNA]</scope>
    <source>
        <strain>JPCM5</strain>
    </source>
</reference>
<sequence>MRRRPAQLTATKLADEEVPELTLVPDGVSRWTGADLDALRNAARRGGAEAAQQDLERKLCRTIDILGARSQQAQEINTVLTSVARLRENSTFRLYLLTQNHRGVGILKVGVKKLFVTHPVTCGLVEVDPLCVLDFYVDESCQRQGYGKTLYSHMLKAEHVSRPEVLAIDRPSNKLLGFLRKHYGLAAYTPQVNNFVVFHSFFDHTTVSERGKLLRAPSPARALPFSSSTNATAAIGGAKAKNWAPG</sequence>